<accession>Q48UF9</accession>
<protein>
    <recommendedName>
        <fullName evidence="1">Septation ring formation regulator EzrA</fullName>
    </recommendedName>
</protein>
<proteinExistence type="inferred from homology"/>
<sequence length="574" mass="66062">MSSGIILLIVAIVLLVIIAYLVGVIIRKRNDSLITSLEERKQALFALPVNDEIEEVKSLHLIGQSQTSFREWNQKWVDLTVNSFADIENHIFEAENLNDTFNFIRAKHEINSVESQLNLVEEDIASIREALNILKEQEEKNSARVTHALDLYEKLQASISENEDNFGSTMPEIDKQMKNIETEFSQFVALNSSGDPVEASEVLDRAEEHTIALGQITEQIPAIVAKLEDDFPDQLDDLETGYRRLLEENYHFPEKNIEARFQEIRESIRANSSELVTLDLDRAREENTHIQERIDSLYEVFEREIAAYKVAAKNSKMLPRYLAHVKRNNEQLKDEIARLSRKYILSETESLTVKAFEKDIKEIEDSTLAVAEQFGLQEKPFSELQVTFERSIKTLTNVESGQMDVFAAVKDIEKIESQARHNLDVYVTQLHMIKRYMEKRHLPGIPQDFLSAFFTTSSQLEALMDELSRGRINIEAVSRLSEVATVAIANLEDLTYQVVQNATLTEQLLQYSNRYRSFEAGVQSSFEHALRLFEVENDYQASFDEISYALETVEPGVTDRFVNSYEKTREHIRF</sequence>
<comment type="function">
    <text evidence="1">Negative regulator of FtsZ ring formation; modulates the frequency and position of FtsZ ring formation. Inhibits FtsZ ring formation at polar sites. Interacts either with FtsZ or with one of its binding partners to promote depolymerization.</text>
</comment>
<comment type="subcellular location">
    <subcellularLocation>
        <location evidence="1">Cell membrane</location>
        <topology evidence="1">Single-pass membrane protein</topology>
    </subcellularLocation>
    <text evidence="1">Colocalized with FtsZ to the nascent septal site.</text>
</comment>
<comment type="similarity">
    <text evidence="1">Belongs to the EzrA family.</text>
</comment>
<keyword id="KW-0131">Cell cycle</keyword>
<keyword id="KW-0132">Cell division</keyword>
<keyword id="KW-1003">Cell membrane</keyword>
<keyword id="KW-0175">Coiled coil</keyword>
<keyword id="KW-0472">Membrane</keyword>
<keyword id="KW-0717">Septation</keyword>
<keyword id="KW-0812">Transmembrane</keyword>
<keyword id="KW-1133">Transmembrane helix</keyword>
<reference key="1">
    <citation type="journal article" date="2005" name="J. Infect. Dis.">
        <title>Genome sequence of a serotype M28 strain of group A Streptococcus: potential new insights into puerperal sepsis and bacterial disease specificity.</title>
        <authorList>
            <person name="Green N.M."/>
            <person name="Zhang S."/>
            <person name="Porcella S.F."/>
            <person name="Nagiec M.J."/>
            <person name="Barbian K.D."/>
            <person name="Beres S.B."/>
            <person name="Lefebvre R.B."/>
            <person name="Musser J.M."/>
        </authorList>
    </citation>
    <scope>NUCLEOTIDE SEQUENCE [LARGE SCALE GENOMIC DNA]</scope>
    <source>
        <strain>MGAS6180</strain>
    </source>
</reference>
<evidence type="ECO:0000255" key="1">
    <source>
        <dbReference type="HAMAP-Rule" id="MF_00728"/>
    </source>
</evidence>
<gene>
    <name evidence="1" type="primary">ezrA</name>
    <name type="ordered locus">M28_Spy0533</name>
</gene>
<feature type="chain" id="PRO_1000045912" description="Septation ring formation regulator EzrA">
    <location>
        <begin position="1"/>
        <end position="574"/>
    </location>
</feature>
<feature type="topological domain" description="Extracellular" evidence="1">
    <location>
        <begin position="1"/>
        <end position="7"/>
    </location>
</feature>
<feature type="transmembrane region" description="Helical" evidence="1">
    <location>
        <begin position="8"/>
        <end position="26"/>
    </location>
</feature>
<feature type="topological domain" description="Cytoplasmic" evidence="1">
    <location>
        <begin position="27"/>
        <end position="574"/>
    </location>
</feature>
<feature type="coiled-coil region" evidence="1">
    <location>
        <begin position="102"/>
        <end position="141"/>
    </location>
</feature>
<feature type="coiled-coil region" evidence="1">
    <location>
        <begin position="274"/>
        <end position="350"/>
    </location>
</feature>
<feature type="coiled-coil region" evidence="1">
    <location>
        <begin position="459"/>
        <end position="520"/>
    </location>
</feature>
<organism>
    <name type="scientific">Streptococcus pyogenes serotype M28 (strain MGAS6180)</name>
    <dbReference type="NCBI Taxonomy" id="319701"/>
    <lineage>
        <taxon>Bacteria</taxon>
        <taxon>Bacillati</taxon>
        <taxon>Bacillota</taxon>
        <taxon>Bacilli</taxon>
        <taxon>Lactobacillales</taxon>
        <taxon>Streptococcaceae</taxon>
        <taxon>Streptococcus</taxon>
    </lineage>
</organism>
<name>EZRA_STRPM</name>
<dbReference type="EMBL" id="CP000056">
    <property type="protein sequence ID" value="AAX71647.1"/>
    <property type="molecule type" value="Genomic_DNA"/>
</dbReference>
<dbReference type="RefSeq" id="WP_002990455.1">
    <property type="nucleotide sequence ID" value="NC_007296.2"/>
</dbReference>
<dbReference type="SMR" id="Q48UF9"/>
<dbReference type="GeneID" id="69901136"/>
<dbReference type="KEGG" id="spb:M28_Spy0533"/>
<dbReference type="HOGENOM" id="CLU_034079_2_0_9"/>
<dbReference type="GO" id="GO:0005886">
    <property type="term" value="C:plasma membrane"/>
    <property type="evidence" value="ECO:0007669"/>
    <property type="project" value="UniProtKB-SubCell"/>
</dbReference>
<dbReference type="GO" id="GO:0005940">
    <property type="term" value="C:septin ring"/>
    <property type="evidence" value="ECO:0007669"/>
    <property type="project" value="InterPro"/>
</dbReference>
<dbReference type="GO" id="GO:0000917">
    <property type="term" value="P:division septum assembly"/>
    <property type="evidence" value="ECO:0007669"/>
    <property type="project" value="UniProtKB-KW"/>
</dbReference>
<dbReference type="GO" id="GO:0000921">
    <property type="term" value="P:septin ring assembly"/>
    <property type="evidence" value="ECO:0007669"/>
    <property type="project" value="InterPro"/>
</dbReference>
<dbReference type="HAMAP" id="MF_00728">
    <property type="entry name" value="EzrA"/>
    <property type="match status" value="1"/>
</dbReference>
<dbReference type="InterPro" id="IPR010379">
    <property type="entry name" value="EzrA"/>
</dbReference>
<dbReference type="NCBIfam" id="NF003407">
    <property type="entry name" value="PRK04778.1-1"/>
    <property type="match status" value="1"/>
</dbReference>
<dbReference type="NCBIfam" id="NF003410">
    <property type="entry name" value="PRK04778.1-4"/>
    <property type="match status" value="1"/>
</dbReference>
<dbReference type="Pfam" id="PF06160">
    <property type="entry name" value="EzrA"/>
    <property type="match status" value="1"/>
</dbReference>